<protein>
    <recommendedName>
        <fullName evidence="3">Benzil reductase ((S)-benzoin forming)</fullName>
        <ecNumber evidence="3">1.1.1.320</ecNumber>
    </recommendedName>
</protein>
<reference key="1">
    <citation type="journal article" date="1997" name="Nature">
        <title>The complete genome sequence of the Gram-positive bacterium Bacillus subtilis.</title>
        <authorList>
            <person name="Kunst F."/>
            <person name="Ogasawara N."/>
            <person name="Moszer I."/>
            <person name="Albertini A.M."/>
            <person name="Alloni G."/>
            <person name="Azevedo V."/>
            <person name="Bertero M.G."/>
            <person name="Bessieres P."/>
            <person name="Bolotin A."/>
            <person name="Borchert S."/>
            <person name="Borriss R."/>
            <person name="Boursier L."/>
            <person name="Brans A."/>
            <person name="Braun M."/>
            <person name="Brignell S.C."/>
            <person name="Bron S."/>
            <person name="Brouillet S."/>
            <person name="Bruschi C.V."/>
            <person name="Caldwell B."/>
            <person name="Capuano V."/>
            <person name="Carter N.M."/>
            <person name="Choi S.-K."/>
            <person name="Codani J.-J."/>
            <person name="Connerton I.F."/>
            <person name="Cummings N.J."/>
            <person name="Daniel R.A."/>
            <person name="Denizot F."/>
            <person name="Devine K.M."/>
            <person name="Duesterhoeft A."/>
            <person name="Ehrlich S.D."/>
            <person name="Emmerson P.T."/>
            <person name="Entian K.-D."/>
            <person name="Errington J."/>
            <person name="Fabret C."/>
            <person name="Ferrari E."/>
            <person name="Foulger D."/>
            <person name="Fritz C."/>
            <person name="Fujita M."/>
            <person name="Fujita Y."/>
            <person name="Fuma S."/>
            <person name="Galizzi A."/>
            <person name="Galleron N."/>
            <person name="Ghim S.-Y."/>
            <person name="Glaser P."/>
            <person name="Goffeau A."/>
            <person name="Golightly E.J."/>
            <person name="Grandi G."/>
            <person name="Guiseppi G."/>
            <person name="Guy B.J."/>
            <person name="Haga K."/>
            <person name="Haiech J."/>
            <person name="Harwood C.R."/>
            <person name="Henaut A."/>
            <person name="Hilbert H."/>
            <person name="Holsappel S."/>
            <person name="Hosono S."/>
            <person name="Hullo M.-F."/>
            <person name="Itaya M."/>
            <person name="Jones L.-M."/>
            <person name="Joris B."/>
            <person name="Karamata D."/>
            <person name="Kasahara Y."/>
            <person name="Klaerr-Blanchard M."/>
            <person name="Klein C."/>
            <person name="Kobayashi Y."/>
            <person name="Koetter P."/>
            <person name="Koningstein G."/>
            <person name="Krogh S."/>
            <person name="Kumano M."/>
            <person name="Kurita K."/>
            <person name="Lapidus A."/>
            <person name="Lardinois S."/>
            <person name="Lauber J."/>
            <person name="Lazarevic V."/>
            <person name="Lee S.-M."/>
            <person name="Levine A."/>
            <person name="Liu H."/>
            <person name="Masuda S."/>
            <person name="Mauel C."/>
            <person name="Medigue C."/>
            <person name="Medina N."/>
            <person name="Mellado R.P."/>
            <person name="Mizuno M."/>
            <person name="Moestl D."/>
            <person name="Nakai S."/>
            <person name="Noback M."/>
            <person name="Noone D."/>
            <person name="O'Reilly M."/>
            <person name="Ogawa K."/>
            <person name="Ogiwara A."/>
            <person name="Oudega B."/>
            <person name="Park S.-H."/>
            <person name="Parro V."/>
            <person name="Pohl T.M."/>
            <person name="Portetelle D."/>
            <person name="Porwollik S."/>
            <person name="Prescott A.M."/>
            <person name="Presecan E."/>
            <person name="Pujic P."/>
            <person name="Purnelle B."/>
            <person name="Rapoport G."/>
            <person name="Rey M."/>
            <person name="Reynolds S."/>
            <person name="Rieger M."/>
            <person name="Rivolta C."/>
            <person name="Rocha E."/>
            <person name="Roche B."/>
            <person name="Rose M."/>
            <person name="Sadaie Y."/>
            <person name="Sato T."/>
            <person name="Scanlan E."/>
            <person name="Schleich S."/>
            <person name="Schroeter R."/>
            <person name="Scoffone F."/>
            <person name="Sekiguchi J."/>
            <person name="Sekowska A."/>
            <person name="Seror S.J."/>
            <person name="Serror P."/>
            <person name="Shin B.-S."/>
            <person name="Soldo B."/>
            <person name="Sorokin A."/>
            <person name="Tacconi E."/>
            <person name="Takagi T."/>
            <person name="Takahashi H."/>
            <person name="Takemaru K."/>
            <person name="Takeuchi M."/>
            <person name="Tamakoshi A."/>
            <person name="Tanaka T."/>
            <person name="Terpstra P."/>
            <person name="Tognoni A."/>
            <person name="Tosato V."/>
            <person name="Uchiyama S."/>
            <person name="Vandenbol M."/>
            <person name="Vannier F."/>
            <person name="Vassarotti A."/>
            <person name="Viari A."/>
            <person name="Wambutt R."/>
            <person name="Wedler E."/>
            <person name="Wedler H."/>
            <person name="Weitzenegger T."/>
            <person name="Winters P."/>
            <person name="Wipat A."/>
            <person name="Yamamoto H."/>
            <person name="Yamane K."/>
            <person name="Yasumoto K."/>
            <person name="Yata K."/>
            <person name="Yoshida K."/>
            <person name="Yoshikawa H.-F."/>
            <person name="Zumstein E."/>
            <person name="Yoshikawa H."/>
            <person name="Danchin A."/>
        </authorList>
    </citation>
    <scope>NUCLEOTIDE SEQUENCE [LARGE SCALE GENOMIC DNA]</scope>
    <source>
        <strain>168</strain>
    </source>
</reference>
<comment type="function">
    <text evidence="3">Reduces benzil stereospecifically to (S)-benzoin.</text>
</comment>
<comment type="catalytic activity">
    <reaction evidence="3">
        <text>(S)-benzoin + NADP(+) = benzil + NADPH + H(+)</text>
        <dbReference type="Rhea" id="RHEA:25968"/>
        <dbReference type="ChEBI" id="CHEBI:15378"/>
        <dbReference type="ChEBI" id="CHEBI:51507"/>
        <dbReference type="ChEBI" id="CHEBI:51510"/>
        <dbReference type="ChEBI" id="CHEBI:57783"/>
        <dbReference type="ChEBI" id="CHEBI:58349"/>
        <dbReference type="EC" id="1.1.1.320"/>
    </reaction>
</comment>
<comment type="subcellular location">
    <subcellularLocation>
        <location evidence="3">Cytoplasm</location>
    </subcellularLocation>
</comment>
<comment type="similarity">
    <text evidence="5">Belongs to the short-chain dehydrogenases/reductases (SDR) family.</text>
</comment>
<dbReference type="EC" id="1.1.1.320" evidence="3"/>
<dbReference type="EMBL" id="AL009126">
    <property type="protein sequence ID" value="CAB15172.1"/>
    <property type="molecule type" value="Genomic_DNA"/>
</dbReference>
<dbReference type="PIR" id="E70007">
    <property type="entry name" value="E70007"/>
</dbReference>
<dbReference type="RefSeq" id="WP_003244421.1">
    <property type="nucleotide sequence ID" value="NZ_OZ025638.1"/>
</dbReference>
<dbReference type="SMR" id="O32099"/>
<dbReference type="FunCoup" id="O32099">
    <property type="interactions" value="71"/>
</dbReference>
<dbReference type="STRING" id="224308.BSU31840"/>
<dbReference type="PaxDb" id="224308-BSU31840"/>
<dbReference type="EnsemblBacteria" id="CAB15172">
    <property type="protein sequence ID" value="CAB15172"/>
    <property type="gene ID" value="BSU_31840"/>
</dbReference>
<dbReference type="GeneID" id="936558"/>
<dbReference type="KEGG" id="bsu:BSU31840"/>
<dbReference type="PATRIC" id="fig|224308.179.peg.3450"/>
<dbReference type="eggNOG" id="COG1028">
    <property type="taxonomic scope" value="Bacteria"/>
</dbReference>
<dbReference type="InParanoid" id="O32099"/>
<dbReference type="OrthoDB" id="9794387at2"/>
<dbReference type="PhylomeDB" id="O32099"/>
<dbReference type="BioCyc" id="BSUB:BSU31840-MONOMER"/>
<dbReference type="Proteomes" id="UP000001570">
    <property type="component" value="Chromosome"/>
</dbReference>
<dbReference type="GO" id="GO:0005737">
    <property type="term" value="C:cytoplasm"/>
    <property type="evidence" value="ECO:0007669"/>
    <property type="project" value="UniProtKB-SubCell"/>
</dbReference>
<dbReference type="GO" id="GO:0102306">
    <property type="term" value="F:benzil reductase [(S)-benzoin-forming] activity"/>
    <property type="evidence" value="ECO:0007669"/>
    <property type="project" value="UniProtKB-EC"/>
</dbReference>
<dbReference type="GO" id="GO:0004757">
    <property type="term" value="F:sepiapterin reductase (NADP+) activity"/>
    <property type="evidence" value="ECO:0000318"/>
    <property type="project" value="GO_Central"/>
</dbReference>
<dbReference type="GO" id="GO:0006729">
    <property type="term" value="P:tetrahydrobiopterin biosynthetic process"/>
    <property type="evidence" value="ECO:0000318"/>
    <property type="project" value="GO_Central"/>
</dbReference>
<dbReference type="CDD" id="cd05367">
    <property type="entry name" value="SPR-like_SDR_c"/>
    <property type="match status" value="1"/>
</dbReference>
<dbReference type="Gene3D" id="3.40.50.720">
    <property type="entry name" value="NAD(P)-binding Rossmann-like Domain"/>
    <property type="match status" value="1"/>
</dbReference>
<dbReference type="InterPro" id="IPR051721">
    <property type="entry name" value="Biopterin_syn/organic_redct"/>
</dbReference>
<dbReference type="InterPro" id="IPR036291">
    <property type="entry name" value="NAD(P)-bd_dom_sf"/>
</dbReference>
<dbReference type="InterPro" id="IPR020904">
    <property type="entry name" value="Sc_DH/Rdtase_CS"/>
</dbReference>
<dbReference type="InterPro" id="IPR002347">
    <property type="entry name" value="SDR_fam"/>
</dbReference>
<dbReference type="NCBIfam" id="NF005381">
    <property type="entry name" value="PRK06924.1"/>
    <property type="match status" value="1"/>
</dbReference>
<dbReference type="PANTHER" id="PTHR44085">
    <property type="entry name" value="SEPIAPTERIN REDUCTASE"/>
    <property type="match status" value="1"/>
</dbReference>
<dbReference type="PANTHER" id="PTHR44085:SF2">
    <property type="entry name" value="SEPIAPTERIN REDUCTASE"/>
    <property type="match status" value="1"/>
</dbReference>
<dbReference type="Pfam" id="PF00106">
    <property type="entry name" value="adh_short"/>
    <property type="match status" value="1"/>
</dbReference>
<dbReference type="PRINTS" id="PR00081">
    <property type="entry name" value="GDHRDH"/>
</dbReference>
<dbReference type="SUPFAM" id="SSF51735">
    <property type="entry name" value="NAD(P)-binding Rossmann-fold domains"/>
    <property type="match status" value="1"/>
</dbReference>
<dbReference type="PROSITE" id="PS00061">
    <property type="entry name" value="ADH_SHORT"/>
    <property type="match status" value="1"/>
</dbReference>
<accession>O32099</accession>
<gene>
    <name type="primary">yueD</name>
    <name type="ordered locus">BSU31840</name>
</gene>
<keyword id="KW-0963">Cytoplasm</keyword>
<keyword id="KW-0521">NADP</keyword>
<keyword id="KW-0560">Oxidoreductase</keyword>
<keyword id="KW-1185">Reference proteome</keyword>
<evidence type="ECO:0000250" key="1">
    <source>
        <dbReference type="UniProtKB" id="L0E2Z4"/>
    </source>
</evidence>
<evidence type="ECO:0000250" key="2">
    <source>
        <dbReference type="UniProtKB" id="O93868"/>
    </source>
</evidence>
<evidence type="ECO:0000250" key="3">
    <source>
        <dbReference type="UniProtKB" id="Q8RJB2"/>
    </source>
</evidence>
<evidence type="ECO:0000255" key="4">
    <source>
        <dbReference type="PROSITE-ProRule" id="PRU10001"/>
    </source>
</evidence>
<evidence type="ECO:0000305" key="5"/>
<organism>
    <name type="scientific">Bacillus subtilis (strain 168)</name>
    <dbReference type="NCBI Taxonomy" id="224308"/>
    <lineage>
        <taxon>Bacteria</taxon>
        <taxon>Bacillati</taxon>
        <taxon>Bacillota</taxon>
        <taxon>Bacilli</taxon>
        <taxon>Bacillales</taxon>
        <taxon>Bacillaceae</taxon>
        <taxon>Bacillus</taxon>
    </lineage>
</organism>
<feature type="chain" id="PRO_0000366976" description="Benzil reductase ((S)-benzoin forming)">
    <location>
        <begin position="1"/>
        <end position="243"/>
    </location>
</feature>
<feature type="active site" description="Proton acceptor" evidence="4">
    <location>
        <position position="147"/>
    </location>
</feature>
<feature type="binding site" evidence="1">
    <location>
        <position position="6"/>
    </location>
    <ligand>
        <name>NADP(+)</name>
        <dbReference type="ChEBI" id="CHEBI:58349"/>
    </ligand>
</feature>
<feature type="binding site" evidence="2">
    <location>
        <position position="80"/>
    </location>
    <ligand>
        <name>NADP(+)</name>
        <dbReference type="ChEBI" id="CHEBI:58349"/>
    </ligand>
</feature>
<feature type="binding site" evidence="2">
    <location>
        <position position="147"/>
    </location>
    <ligand>
        <name>NADP(+)</name>
        <dbReference type="ChEBI" id="CHEBI:58349"/>
    </ligand>
</feature>
<feature type="binding site" evidence="2">
    <location>
        <position position="151"/>
    </location>
    <ligand>
        <name>NADP(+)</name>
        <dbReference type="ChEBI" id="CHEBI:58349"/>
    </ligand>
</feature>
<feature type="binding site" evidence="1">
    <location>
        <position position="184"/>
    </location>
    <ligand>
        <name>NADP(+)</name>
        <dbReference type="ChEBI" id="CHEBI:58349"/>
    </ligand>
</feature>
<proteinExistence type="inferred from homology"/>
<name>BZRD_BACSU</name>
<sequence>MELYIITGASKGLGQAIALQALEKGHEVHALSRTKTDVSHKKLTQHQIDLINLEEAEQQFETLLSSIDSDRYSGITLINNAGMVTPIKRAGEASLDELQRHYQLNLTAPVLLSQLFTKRFASYSGKKTVVNITSGAAKNPYKGWSAYCSSKAGLDMFTRTFGFEQEDEELPVNMISFSPGVMDTEMQAVIRSSSKKDFHHIERFRKLNETGSLRSPDFIAGTLLSLLEKGTENGRIYDIKEFL</sequence>